<feature type="chain" id="PRO_0000411032" description="Mitochondrial morphogenesis protein SLD7">
    <location>
        <begin position="1"/>
        <end position="257"/>
    </location>
</feature>
<dbReference type="EMBL" id="AAFW02000030">
    <property type="protein sequence ID" value="EDN63927.1"/>
    <property type="molecule type" value="Genomic_DNA"/>
</dbReference>
<dbReference type="SMR" id="A6ZNR2"/>
<dbReference type="HOGENOM" id="CLU_072105_0_0_1"/>
<dbReference type="Proteomes" id="UP000007060">
    <property type="component" value="Unassembled WGS sequence"/>
</dbReference>
<dbReference type="GO" id="GO:0005737">
    <property type="term" value="C:cytoplasm"/>
    <property type="evidence" value="ECO:0007669"/>
    <property type="project" value="UniProtKB-KW"/>
</dbReference>
<dbReference type="GO" id="GO:0005634">
    <property type="term" value="C:nucleus"/>
    <property type="evidence" value="ECO:0007669"/>
    <property type="project" value="UniProtKB-SubCell"/>
</dbReference>
<dbReference type="GO" id="GO:0000922">
    <property type="term" value="C:spindle pole"/>
    <property type="evidence" value="ECO:0007669"/>
    <property type="project" value="UniProtKB-SubCell"/>
</dbReference>
<dbReference type="GO" id="GO:0006260">
    <property type="term" value="P:DNA replication"/>
    <property type="evidence" value="ECO:0007669"/>
    <property type="project" value="UniProtKB-KW"/>
</dbReference>
<dbReference type="GO" id="GO:0030174">
    <property type="term" value="P:regulation of DNA-templated DNA replication initiation"/>
    <property type="evidence" value="ECO:0007669"/>
    <property type="project" value="InterPro"/>
</dbReference>
<dbReference type="InterPro" id="IPR016808">
    <property type="entry name" value="Sld7"/>
</dbReference>
<dbReference type="InterPro" id="IPR041260">
    <property type="entry name" value="Sld7_C"/>
</dbReference>
<dbReference type="InterPro" id="IPR041564">
    <property type="entry name" value="Sld7_N"/>
</dbReference>
<dbReference type="Pfam" id="PF18596">
    <property type="entry name" value="Sld7_C"/>
    <property type="match status" value="1"/>
</dbReference>
<dbReference type="Pfam" id="PF18636">
    <property type="entry name" value="Sld7_N"/>
    <property type="match status" value="1"/>
</dbReference>
<dbReference type="PIRSF" id="PIRSF022788">
    <property type="entry name" value="UCP022788"/>
    <property type="match status" value="1"/>
</dbReference>
<name>SLD7_YEAS7</name>
<reference key="1">
    <citation type="journal article" date="2007" name="Proc. Natl. Acad. Sci. U.S.A.">
        <title>Genome sequencing and comparative analysis of Saccharomyces cerevisiae strain YJM789.</title>
        <authorList>
            <person name="Wei W."/>
            <person name="McCusker J.H."/>
            <person name="Hyman R.W."/>
            <person name="Jones T."/>
            <person name="Ning Y."/>
            <person name="Cao Z."/>
            <person name="Gu Z."/>
            <person name="Bruno D."/>
            <person name="Miranda M."/>
            <person name="Nguyen M."/>
            <person name="Wilhelmy J."/>
            <person name="Komp C."/>
            <person name="Tamse R."/>
            <person name="Wang X."/>
            <person name="Jia P."/>
            <person name="Luedi P."/>
            <person name="Oefner P.J."/>
            <person name="David L."/>
            <person name="Dietrich F.S."/>
            <person name="Li Y."/>
            <person name="Davis R.W."/>
            <person name="Steinmetz L.M."/>
        </authorList>
    </citation>
    <scope>NUCLEOTIDE SEQUENCE [LARGE SCALE GENOMIC DNA]</scope>
    <source>
        <strain>YJM789</strain>
    </source>
</reference>
<comment type="function">
    <text evidence="1">Required for the proper function of SLD3 at the initiation of DNA replication. Binds to SLD3 and reduces its affinity for CDC45, a component of the replication fork. Required for mitochondrial morphology (By similarity).</text>
</comment>
<comment type="subunit">
    <text evidence="1">Interacts with SLD3.</text>
</comment>
<comment type="subcellular location">
    <subcellularLocation>
        <location evidence="1">Nucleus</location>
    </subcellularLocation>
    <subcellularLocation>
        <location evidence="1">Cytoplasm</location>
        <location evidence="1">Cytoskeleton</location>
        <location evidence="1">Spindle pole</location>
    </subcellularLocation>
</comment>
<comment type="similarity">
    <text evidence="2">Belongs to the SLD7 family.</text>
</comment>
<gene>
    <name type="primary">SLD7</name>
    <name type="ORF">SCY_5130</name>
</gene>
<organism>
    <name type="scientific">Saccharomyces cerevisiae (strain YJM789)</name>
    <name type="common">Baker's yeast</name>
    <dbReference type="NCBI Taxonomy" id="307796"/>
    <lineage>
        <taxon>Eukaryota</taxon>
        <taxon>Fungi</taxon>
        <taxon>Dikarya</taxon>
        <taxon>Ascomycota</taxon>
        <taxon>Saccharomycotina</taxon>
        <taxon>Saccharomycetes</taxon>
        <taxon>Saccharomycetales</taxon>
        <taxon>Saccharomycetaceae</taxon>
        <taxon>Saccharomyces</taxon>
    </lineage>
</organism>
<evidence type="ECO:0000250" key="1"/>
<evidence type="ECO:0000305" key="2"/>
<proteinExistence type="inferred from homology"/>
<accession>A6ZNR2</accession>
<protein>
    <recommendedName>
        <fullName>Mitochondrial morphogenesis protein SLD7</fullName>
    </recommendedName>
    <alternativeName>
        <fullName>Synthetic lethality with DPB11-24 mutation protein 7</fullName>
    </alternativeName>
</protein>
<keyword id="KW-0131">Cell cycle</keyword>
<keyword id="KW-0963">Cytoplasm</keyword>
<keyword id="KW-0206">Cytoskeleton</keyword>
<keyword id="KW-0235">DNA replication</keyword>
<keyword id="KW-0539">Nucleus</keyword>
<sequence>MSRKLCTLNFTLSGKQGSLVIRDIQLWSNRPTASKSTSELRGQFIQYVDLAKLPLWVRSTNMNTYRCYSTSATAQAYFKSKLRNANRGIVIELSDKVDQRSQEPAYLIIFRENTELNCFQVDLTMKHEFDGQVTKLKQEIGKTRASVSKEGSIDIIIQQSQQRKIGTKTKVYRNVHINDKRLQFNETLSKLILGGLRLRGISNSITDYQKLYKITFDAAEFTHRDELKRISMGSGEEVSFESLQETVETLLKLFTKS</sequence>